<evidence type="ECO:0000255" key="1">
    <source>
        <dbReference type="HAMAP-Rule" id="MF_00373"/>
    </source>
</evidence>
<evidence type="ECO:0000305" key="2"/>
<sequence length="78" mass="9055">MARVCQITGKRPVTGNNVSHAHNKTRRRFLPNLHSHRFWVESENRWVRLRISSKGLRIIDKKGIDAVLADLRARGEKV</sequence>
<dbReference type="EMBL" id="CP001339">
    <property type="protein sequence ID" value="ACL71423.1"/>
    <property type="molecule type" value="Genomic_DNA"/>
</dbReference>
<dbReference type="RefSeq" id="WP_012636912.1">
    <property type="nucleotide sequence ID" value="NC_011901.1"/>
</dbReference>
<dbReference type="SMR" id="B8GUR2"/>
<dbReference type="STRING" id="396588.Tgr7_0325"/>
<dbReference type="KEGG" id="tgr:Tgr7_0325"/>
<dbReference type="eggNOG" id="COG0227">
    <property type="taxonomic scope" value="Bacteria"/>
</dbReference>
<dbReference type="HOGENOM" id="CLU_064548_3_1_6"/>
<dbReference type="OrthoDB" id="9805609at2"/>
<dbReference type="Proteomes" id="UP000002383">
    <property type="component" value="Chromosome"/>
</dbReference>
<dbReference type="GO" id="GO:0022625">
    <property type="term" value="C:cytosolic large ribosomal subunit"/>
    <property type="evidence" value="ECO:0007669"/>
    <property type="project" value="TreeGrafter"/>
</dbReference>
<dbReference type="GO" id="GO:0003735">
    <property type="term" value="F:structural constituent of ribosome"/>
    <property type="evidence" value="ECO:0007669"/>
    <property type="project" value="InterPro"/>
</dbReference>
<dbReference type="GO" id="GO:0006412">
    <property type="term" value="P:translation"/>
    <property type="evidence" value="ECO:0007669"/>
    <property type="project" value="UniProtKB-UniRule"/>
</dbReference>
<dbReference type="FunFam" id="2.30.170.40:FF:000001">
    <property type="entry name" value="50S ribosomal protein L28"/>
    <property type="match status" value="1"/>
</dbReference>
<dbReference type="Gene3D" id="2.30.170.40">
    <property type="entry name" value="Ribosomal protein L28/L24"/>
    <property type="match status" value="1"/>
</dbReference>
<dbReference type="HAMAP" id="MF_00373">
    <property type="entry name" value="Ribosomal_bL28"/>
    <property type="match status" value="1"/>
</dbReference>
<dbReference type="InterPro" id="IPR026569">
    <property type="entry name" value="Ribosomal_bL28"/>
</dbReference>
<dbReference type="InterPro" id="IPR034704">
    <property type="entry name" value="Ribosomal_bL28/bL31-like_sf"/>
</dbReference>
<dbReference type="InterPro" id="IPR001383">
    <property type="entry name" value="Ribosomal_bL28_bact-type"/>
</dbReference>
<dbReference type="InterPro" id="IPR037147">
    <property type="entry name" value="Ribosomal_bL28_sf"/>
</dbReference>
<dbReference type="NCBIfam" id="TIGR00009">
    <property type="entry name" value="L28"/>
    <property type="match status" value="1"/>
</dbReference>
<dbReference type="PANTHER" id="PTHR13528">
    <property type="entry name" value="39S RIBOSOMAL PROTEIN L28, MITOCHONDRIAL"/>
    <property type="match status" value="1"/>
</dbReference>
<dbReference type="PANTHER" id="PTHR13528:SF2">
    <property type="entry name" value="LARGE RIBOSOMAL SUBUNIT PROTEIN BL28M"/>
    <property type="match status" value="1"/>
</dbReference>
<dbReference type="Pfam" id="PF00830">
    <property type="entry name" value="Ribosomal_L28"/>
    <property type="match status" value="1"/>
</dbReference>
<dbReference type="SUPFAM" id="SSF143800">
    <property type="entry name" value="L28p-like"/>
    <property type="match status" value="1"/>
</dbReference>
<feature type="chain" id="PRO_1000195948" description="Large ribosomal subunit protein bL28">
    <location>
        <begin position="1"/>
        <end position="78"/>
    </location>
</feature>
<reference key="1">
    <citation type="journal article" date="2011" name="Stand. Genomic Sci.">
        <title>Complete genome sequence of 'Thioalkalivibrio sulfidophilus' HL-EbGr7.</title>
        <authorList>
            <person name="Muyzer G."/>
            <person name="Sorokin D.Y."/>
            <person name="Mavromatis K."/>
            <person name="Lapidus A."/>
            <person name="Clum A."/>
            <person name="Ivanova N."/>
            <person name="Pati A."/>
            <person name="d'Haeseleer P."/>
            <person name="Woyke T."/>
            <person name="Kyrpides N.C."/>
        </authorList>
    </citation>
    <scope>NUCLEOTIDE SEQUENCE [LARGE SCALE GENOMIC DNA]</scope>
    <source>
        <strain>HL-EbGR7</strain>
    </source>
</reference>
<comment type="similarity">
    <text evidence="1">Belongs to the bacterial ribosomal protein bL28 family.</text>
</comment>
<protein>
    <recommendedName>
        <fullName evidence="1">Large ribosomal subunit protein bL28</fullName>
    </recommendedName>
    <alternativeName>
        <fullName evidence="2">50S ribosomal protein L28</fullName>
    </alternativeName>
</protein>
<gene>
    <name evidence="1" type="primary">rpmB</name>
    <name type="ordered locus">Tgr7_0325</name>
</gene>
<organism>
    <name type="scientific">Thioalkalivibrio sulfidiphilus (strain HL-EbGR7)</name>
    <dbReference type="NCBI Taxonomy" id="396588"/>
    <lineage>
        <taxon>Bacteria</taxon>
        <taxon>Pseudomonadati</taxon>
        <taxon>Pseudomonadota</taxon>
        <taxon>Gammaproteobacteria</taxon>
        <taxon>Chromatiales</taxon>
        <taxon>Ectothiorhodospiraceae</taxon>
        <taxon>Thioalkalivibrio</taxon>
    </lineage>
</organism>
<accession>B8GUR2</accession>
<proteinExistence type="inferred from homology"/>
<name>RL28_THISH</name>
<keyword id="KW-1185">Reference proteome</keyword>
<keyword id="KW-0687">Ribonucleoprotein</keyword>
<keyword id="KW-0689">Ribosomal protein</keyword>